<organism>
    <name type="scientific">Shigella flexneri</name>
    <dbReference type="NCBI Taxonomy" id="623"/>
    <lineage>
        <taxon>Bacteria</taxon>
        <taxon>Pseudomonadati</taxon>
        <taxon>Pseudomonadota</taxon>
        <taxon>Gammaproteobacteria</taxon>
        <taxon>Enterobacterales</taxon>
        <taxon>Enterobacteriaceae</taxon>
        <taxon>Shigella</taxon>
    </lineage>
</organism>
<dbReference type="EC" id="3.4.11.18" evidence="1"/>
<dbReference type="EMBL" id="AE005674">
    <property type="protein sequence ID" value="AAN41820.1"/>
    <property type="molecule type" value="Genomic_DNA"/>
</dbReference>
<dbReference type="EMBL" id="AE014073">
    <property type="protein sequence ID" value="AAP15701.1"/>
    <property type="molecule type" value="Genomic_DNA"/>
</dbReference>
<dbReference type="RefSeq" id="NP_706113.1">
    <property type="nucleotide sequence ID" value="NC_004337.2"/>
</dbReference>
<dbReference type="RefSeq" id="WP_001018194.1">
    <property type="nucleotide sequence ID" value="NZ_WPGW01000006.1"/>
</dbReference>
<dbReference type="SMR" id="P0AE21"/>
<dbReference type="STRING" id="198214.SF0158"/>
<dbReference type="MEROPS" id="M24.001"/>
<dbReference type="PaxDb" id="198214-SF0158"/>
<dbReference type="GeneID" id="1024468"/>
<dbReference type="GeneID" id="93777257"/>
<dbReference type="KEGG" id="sfl:SF0158"/>
<dbReference type="KEGG" id="sfx:S0161"/>
<dbReference type="PATRIC" id="fig|198214.7.peg.178"/>
<dbReference type="HOGENOM" id="CLU_015857_0_0_6"/>
<dbReference type="Proteomes" id="UP000001006">
    <property type="component" value="Chromosome"/>
</dbReference>
<dbReference type="Proteomes" id="UP000002673">
    <property type="component" value="Chromosome"/>
</dbReference>
<dbReference type="GO" id="GO:0005829">
    <property type="term" value="C:cytosol"/>
    <property type="evidence" value="ECO:0007669"/>
    <property type="project" value="TreeGrafter"/>
</dbReference>
<dbReference type="GO" id="GO:0004239">
    <property type="term" value="F:initiator methionyl aminopeptidase activity"/>
    <property type="evidence" value="ECO:0007669"/>
    <property type="project" value="UniProtKB-UniRule"/>
</dbReference>
<dbReference type="GO" id="GO:0046872">
    <property type="term" value="F:metal ion binding"/>
    <property type="evidence" value="ECO:0007669"/>
    <property type="project" value="UniProtKB-UniRule"/>
</dbReference>
<dbReference type="GO" id="GO:0070006">
    <property type="term" value="F:metalloaminopeptidase activity"/>
    <property type="evidence" value="ECO:0007669"/>
    <property type="project" value="UniProtKB-UniRule"/>
</dbReference>
<dbReference type="GO" id="GO:0006508">
    <property type="term" value="P:proteolysis"/>
    <property type="evidence" value="ECO:0007669"/>
    <property type="project" value="UniProtKB-KW"/>
</dbReference>
<dbReference type="CDD" id="cd01086">
    <property type="entry name" value="MetAP1"/>
    <property type="match status" value="1"/>
</dbReference>
<dbReference type="FunFam" id="3.90.230.10:FF:000001">
    <property type="entry name" value="Methionine aminopeptidase"/>
    <property type="match status" value="1"/>
</dbReference>
<dbReference type="Gene3D" id="3.90.230.10">
    <property type="entry name" value="Creatinase/methionine aminopeptidase superfamily"/>
    <property type="match status" value="1"/>
</dbReference>
<dbReference type="HAMAP" id="MF_01974">
    <property type="entry name" value="MetAP_1"/>
    <property type="match status" value="1"/>
</dbReference>
<dbReference type="InterPro" id="IPR036005">
    <property type="entry name" value="Creatinase/aminopeptidase-like"/>
</dbReference>
<dbReference type="InterPro" id="IPR000994">
    <property type="entry name" value="Pept_M24"/>
</dbReference>
<dbReference type="InterPro" id="IPR001714">
    <property type="entry name" value="Pept_M24_MAP"/>
</dbReference>
<dbReference type="InterPro" id="IPR002467">
    <property type="entry name" value="Pept_M24A_MAP1"/>
</dbReference>
<dbReference type="NCBIfam" id="TIGR00500">
    <property type="entry name" value="met_pdase_I"/>
    <property type="match status" value="1"/>
</dbReference>
<dbReference type="PANTHER" id="PTHR43330">
    <property type="entry name" value="METHIONINE AMINOPEPTIDASE"/>
    <property type="match status" value="1"/>
</dbReference>
<dbReference type="PANTHER" id="PTHR43330:SF27">
    <property type="entry name" value="METHIONINE AMINOPEPTIDASE"/>
    <property type="match status" value="1"/>
</dbReference>
<dbReference type="Pfam" id="PF00557">
    <property type="entry name" value="Peptidase_M24"/>
    <property type="match status" value="1"/>
</dbReference>
<dbReference type="PRINTS" id="PR00599">
    <property type="entry name" value="MAPEPTIDASE"/>
</dbReference>
<dbReference type="SUPFAM" id="SSF55920">
    <property type="entry name" value="Creatinase/aminopeptidase"/>
    <property type="match status" value="1"/>
</dbReference>
<dbReference type="PROSITE" id="PS00680">
    <property type="entry name" value="MAP_1"/>
    <property type="match status" value="1"/>
</dbReference>
<sequence>MAISIKTPEDIEKMRVAGRLAAEVLEMIEPYVKPGVSTGELDRICNDYIVNEQHAVSACLGYHGYPKSVCISINEVVCHGIPDDAKLLKDGDIVNIDVTVIKDGFHGDTSKMFIVGKPTIMGERLCRITQESLYLALRMVKPGINLREIGAAIQKFVEAEGFSVVREYCGHGIGRGFHEEPQVLHYDSRETNVVLKPGMTFTIEPMVNAGKKEIRTMKDGWTVKTKDRSLSAQYEHTIVVTDNGCEILTLRKDDTIPAIISHDE</sequence>
<name>MAP1_SHIFL</name>
<protein>
    <recommendedName>
        <fullName evidence="1">Methionine aminopeptidase</fullName>
        <shortName evidence="1">MAP</shortName>
        <shortName evidence="1">MetAP</shortName>
        <ecNumber evidence="1">3.4.11.18</ecNumber>
    </recommendedName>
    <alternativeName>
        <fullName evidence="1">Peptidase M</fullName>
    </alternativeName>
</protein>
<proteinExistence type="inferred from homology"/>
<keyword id="KW-0031">Aminopeptidase</keyword>
<keyword id="KW-0378">Hydrolase</keyword>
<keyword id="KW-0479">Metal-binding</keyword>
<keyword id="KW-0645">Protease</keyword>
<keyword id="KW-1185">Reference proteome</keyword>
<accession>P0AE21</accession>
<accession>P07906</accession>
<reference key="1">
    <citation type="journal article" date="2002" name="Nucleic Acids Res.">
        <title>Genome sequence of Shigella flexneri 2a: insights into pathogenicity through comparison with genomes of Escherichia coli K12 and O157.</title>
        <authorList>
            <person name="Jin Q."/>
            <person name="Yuan Z."/>
            <person name="Xu J."/>
            <person name="Wang Y."/>
            <person name="Shen Y."/>
            <person name="Lu W."/>
            <person name="Wang J."/>
            <person name="Liu H."/>
            <person name="Yang J."/>
            <person name="Yang F."/>
            <person name="Zhang X."/>
            <person name="Zhang J."/>
            <person name="Yang G."/>
            <person name="Wu H."/>
            <person name="Qu D."/>
            <person name="Dong J."/>
            <person name="Sun L."/>
            <person name="Xue Y."/>
            <person name="Zhao A."/>
            <person name="Gao Y."/>
            <person name="Zhu J."/>
            <person name="Kan B."/>
            <person name="Ding K."/>
            <person name="Chen S."/>
            <person name="Cheng H."/>
            <person name="Yao Z."/>
            <person name="He B."/>
            <person name="Chen R."/>
            <person name="Ma D."/>
            <person name="Qiang B."/>
            <person name="Wen Y."/>
            <person name="Hou Y."/>
            <person name="Yu J."/>
        </authorList>
    </citation>
    <scope>NUCLEOTIDE SEQUENCE [LARGE SCALE GENOMIC DNA]</scope>
    <source>
        <strain>301 / Serotype 2a</strain>
    </source>
</reference>
<reference key="2">
    <citation type="journal article" date="2003" name="Infect. Immun.">
        <title>Complete genome sequence and comparative genomics of Shigella flexneri serotype 2a strain 2457T.</title>
        <authorList>
            <person name="Wei J."/>
            <person name="Goldberg M.B."/>
            <person name="Burland V."/>
            <person name="Venkatesan M.M."/>
            <person name="Deng W."/>
            <person name="Fournier G."/>
            <person name="Mayhew G.F."/>
            <person name="Plunkett G. III"/>
            <person name="Rose D.J."/>
            <person name="Darling A."/>
            <person name="Mau B."/>
            <person name="Perna N.T."/>
            <person name="Payne S.M."/>
            <person name="Runyen-Janecky L.J."/>
            <person name="Zhou S."/>
            <person name="Schwartz D.C."/>
            <person name="Blattner F.R."/>
        </authorList>
    </citation>
    <scope>NUCLEOTIDE SEQUENCE [LARGE SCALE GENOMIC DNA]</scope>
    <source>
        <strain>ATCC 700930 / 2457T / Serotype 2a</strain>
    </source>
</reference>
<evidence type="ECO:0000255" key="1">
    <source>
        <dbReference type="HAMAP-Rule" id="MF_01974"/>
    </source>
</evidence>
<gene>
    <name evidence="1" type="primary">map</name>
    <name type="ordered locus">SF0158</name>
    <name type="ordered locus">S0161</name>
</gene>
<feature type="chain" id="PRO_0000148953" description="Methionine aminopeptidase">
    <location>
        <begin position="1"/>
        <end position="264"/>
    </location>
</feature>
<feature type="binding site" evidence="1">
    <location>
        <position position="79"/>
    </location>
    <ligand>
        <name>substrate</name>
    </ligand>
</feature>
<feature type="binding site" evidence="1">
    <location>
        <position position="97"/>
    </location>
    <ligand>
        <name>a divalent metal cation</name>
        <dbReference type="ChEBI" id="CHEBI:60240"/>
        <label>1</label>
    </ligand>
</feature>
<feature type="binding site" evidence="1">
    <location>
        <position position="108"/>
    </location>
    <ligand>
        <name>a divalent metal cation</name>
        <dbReference type="ChEBI" id="CHEBI:60240"/>
        <label>1</label>
    </ligand>
</feature>
<feature type="binding site" evidence="1">
    <location>
        <position position="108"/>
    </location>
    <ligand>
        <name>a divalent metal cation</name>
        <dbReference type="ChEBI" id="CHEBI:60240"/>
        <label>2</label>
        <note>catalytic</note>
    </ligand>
</feature>
<feature type="binding site" evidence="1">
    <location>
        <position position="171"/>
    </location>
    <ligand>
        <name>a divalent metal cation</name>
        <dbReference type="ChEBI" id="CHEBI:60240"/>
        <label>2</label>
        <note>catalytic</note>
    </ligand>
</feature>
<feature type="binding site" evidence="1">
    <location>
        <position position="178"/>
    </location>
    <ligand>
        <name>substrate</name>
    </ligand>
</feature>
<feature type="binding site" evidence="1">
    <location>
        <position position="204"/>
    </location>
    <ligand>
        <name>a divalent metal cation</name>
        <dbReference type="ChEBI" id="CHEBI:60240"/>
        <label>2</label>
        <note>catalytic</note>
    </ligand>
</feature>
<feature type="binding site" evidence="1">
    <location>
        <position position="235"/>
    </location>
    <ligand>
        <name>a divalent metal cation</name>
        <dbReference type="ChEBI" id="CHEBI:60240"/>
        <label>1</label>
    </ligand>
</feature>
<feature type="binding site" evidence="1">
    <location>
        <position position="235"/>
    </location>
    <ligand>
        <name>a divalent metal cation</name>
        <dbReference type="ChEBI" id="CHEBI:60240"/>
        <label>2</label>
        <note>catalytic</note>
    </ligand>
</feature>
<comment type="function">
    <text evidence="1">Removes the N-terminal methionine from nascent proteins. The N-terminal methionine is often cleaved when the second residue in the primary sequence is small and uncharged (Met-Ala-, Cys, Gly, Pro, Ser, Thr, or Val). Requires deformylation of the N(alpha)-formylated initiator methionine before it can be hydrolyzed.</text>
</comment>
<comment type="catalytic activity">
    <reaction evidence="1">
        <text>Release of N-terminal amino acids, preferentially methionine, from peptides and arylamides.</text>
        <dbReference type="EC" id="3.4.11.18"/>
    </reaction>
</comment>
<comment type="cofactor">
    <cofactor evidence="1">
        <name>Co(2+)</name>
        <dbReference type="ChEBI" id="CHEBI:48828"/>
    </cofactor>
    <cofactor evidence="1">
        <name>Zn(2+)</name>
        <dbReference type="ChEBI" id="CHEBI:29105"/>
    </cofactor>
    <cofactor evidence="1">
        <name>Mn(2+)</name>
        <dbReference type="ChEBI" id="CHEBI:29035"/>
    </cofactor>
    <cofactor evidence="1">
        <name>Fe(2+)</name>
        <dbReference type="ChEBI" id="CHEBI:29033"/>
    </cofactor>
    <text evidence="1">Binds 2 divalent metal cations per subunit. Has a high-affinity and a low affinity metal-binding site. The true nature of the physiological cofactor is under debate. The enzyme is active with cobalt, zinc, manganese or divalent iron ions. Most likely, methionine aminopeptidases function as mononuclear Fe(2+)-metalloproteases under physiological conditions, and the catalytically relevant metal-binding site has been assigned to the histidine-containing high-affinity site.</text>
</comment>
<comment type="subunit">
    <text evidence="1">Monomer.</text>
</comment>
<comment type="similarity">
    <text evidence="1">Belongs to the peptidase M24A family. Methionine aminopeptidase type 1 subfamily.</text>
</comment>